<feature type="chain" id="PRO_1000164128" description="Phosphatidylglycerol--prolipoprotein diacylglyceryl transferase">
    <location>
        <begin position="1"/>
        <end position="281"/>
    </location>
</feature>
<feature type="transmembrane region" description="Helical" evidence="1">
    <location>
        <begin position="11"/>
        <end position="31"/>
    </location>
</feature>
<feature type="transmembrane region" description="Helical" evidence="1">
    <location>
        <begin position="57"/>
        <end position="77"/>
    </location>
</feature>
<feature type="transmembrane region" description="Helical" evidence="1">
    <location>
        <begin position="89"/>
        <end position="109"/>
    </location>
</feature>
<feature type="transmembrane region" description="Helical" evidence="1">
    <location>
        <begin position="121"/>
        <end position="141"/>
    </location>
</feature>
<feature type="transmembrane region" description="Helical" evidence="1">
    <location>
        <begin position="194"/>
        <end position="214"/>
    </location>
</feature>
<feature type="transmembrane region" description="Helical" evidence="1">
    <location>
        <begin position="222"/>
        <end position="242"/>
    </location>
</feature>
<feature type="transmembrane region" description="Helical" evidence="1">
    <location>
        <begin position="255"/>
        <end position="275"/>
    </location>
</feature>
<feature type="binding site" evidence="1">
    <location>
        <position position="140"/>
    </location>
    <ligand>
        <name>a 1,2-diacyl-sn-glycero-3-phospho-(1'-sn-glycerol)</name>
        <dbReference type="ChEBI" id="CHEBI:64716"/>
    </ligand>
</feature>
<reference key="1">
    <citation type="journal article" date="2009" name="Science">
        <title>The dynamics and time scale of ongoing genomic erosion in symbiotic bacteria.</title>
        <authorList>
            <person name="Moran N.A."/>
            <person name="McLaughlin H.J."/>
            <person name="Sorek R."/>
        </authorList>
    </citation>
    <scope>NUCLEOTIDE SEQUENCE [LARGE SCALE GENOMIC DNA]</scope>
    <source>
        <strain>5A</strain>
    </source>
</reference>
<organism>
    <name type="scientific">Buchnera aphidicola subsp. Acyrthosiphon pisum (strain 5A)</name>
    <dbReference type="NCBI Taxonomy" id="563178"/>
    <lineage>
        <taxon>Bacteria</taxon>
        <taxon>Pseudomonadati</taxon>
        <taxon>Pseudomonadota</taxon>
        <taxon>Gammaproteobacteria</taxon>
        <taxon>Enterobacterales</taxon>
        <taxon>Erwiniaceae</taxon>
        <taxon>Buchnera</taxon>
    </lineage>
</organism>
<sequence>MYIFFPKLNPIIFTIGPVSARWYGFMYVISFLFAMWYGKKCSIKNKKIWYEKKIETLLYSIFLGSCIGGRIGYIIFYNFSYYSQNMLSVFYIWEGGMSFHGGLIGAIIVMSYFSFKYKKKILEISDFITPLIPFGLGAGRIGNFINSELWGRVSPNFSYAMIFPNSQNQDLKEIKKYPELQLLSDQYGALPRHPTQLYEFFLEGILLFFIIYFFSKKDRPTGSISGLFLIFYGLFRIFIEFFREPDPQIGLLKNIITMGQILSLPMIIAGLIIMYKSCYKK</sequence>
<keyword id="KW-0997">Cell inner membrane</keyword>
<keyword id="KW-1003">Cell membrane</keyword>
<keyword id="KW-0472">Membrane</keyword>
<keyword id="KW-0808">Transferase</keyword>
<keyword id="KW-0812">Transmembrane</keyword>
<keyword id="KW-1133">Transmembrane helix</keyword>
<gene>
    <name evidence="1" type="primary">lgt</name>
    <name type="ordered locus">BUAP5A_432</name>
</gene>
<protein>
    <recommendedName>
        <fullName evidence="1">Phosphatidylglycerol--prolipoprotein diacylglyceryl transferase</fullName>
        <ecNumber evidence="1">2.5.1.145</ecNumber>
    </recommendedName>
</protein>
<dbReference type="EC" id="2.5.1.145" evidence="1"/>
<dbReference type="EMBL" id="CP001161">
    <property type="protein sequence ID" value="ACL30788.1"/>
    <property type="molecule type" value="Genomic_DNA"/>
</dbReference>
<dbReference type="RefSeq" id="WP_009874392.1">
    <property type="nucleotide sequence ID" value="NC_011833.1"/>
</dbReference>
<dbReference type="SMR" id="B8D9L7"/>
<dbReference type="KEGG" id="bap:BUAP5A_432"/>
<dbReference type="HOGENOM" id="CLU_013386_1_0_6"/>
<dbReference type="OrthoDB" id="871140at2"/>
<dbReference type="UniPathway" id="UPA00664"/>
<dbReference type="Proteomes" id="UP000006904">
    <property type="component" value="Chromosome"/>
</dbReference>
<dbReference type="GO" id="GO:0005886">
    <property type="term" value="C:plasma membrane"/>
    <property type="evidence" value="ECO:0007669"/>
    <property type="project" value="UniProtKB-SubCell"/>
</dbReference>
<dbReference type="GO" id="GO:0008961">
    <property type="term" value="F:phosphatidylglycerol-prolipoprotein diacylglyceryl transferase activity"/>
    <property type="evidence" value="ECO:0007669"/>
    <property type="project" value="UniProtKB-UniRule"/>
</dbReference>
<dbReference type="GO" id="GO:0042158">
    <property type="term" value="P:lipoprotein biosynthetic process"/>
    <property type="evidence" value="ECO:0007669"/>
    <property type="project" value="UniProtKB-UniRule"/>
</dbReference>
<dbReference type="HAMAP" id="MF_01147">
    <property type="entry name" value="Lgt"/>
    <property type="match status" value="1"/>
</dbReference>
<dbReference type="InterPro" id="IPR001640">
    <property type="entry name" value="Lgt"/>
</dbReference>
<dbReference type="NCBIfam" id="TIGR00544">
    <property type="entry name" value="lgt"/>
    <property type="match status" value="1"/>
</dbReference>
<dbReference type="PANTHER" id="PTHR30589:SF0">
    <property type="entry name" value="PHOSPHATIDYLGLYCEROL--PROLIPOPROTEIN DIACYLGLYCERYL TRANSFERASE"/>
    <property type="match status" value="1"/>
</dbReference>
<dbReference type="PANTHER" id="PTHR30589">
    <property type="entry name" value="PROLIPOPROTEIN DIACYLGLYCERYL TRANSFERASE"/>
    <property type="match status" value="1"/>
</dbReference>
<dbReference type="Pfam" id="PF01790">
    <property type="entry name" value="LGT"/>
    <property type="match status" value="1"/>
</dbReference>
<dbReference type="PROSITE" id="PS01311">
    <property type="entry name" value="LGT"/>
    <property type="match status" value="1"/>
</dbReference>
<proteinExistence type="inferred from homology"/>
<name>LGT_BUCA5</name>
<evidence type="ECO:0000255" key="1">
    <source>
        <dbReference type="HAMAP-Rule" id="MF_01147"/>
    </source>
</evidence>
<comment type="function">
    <text evidence="1">Catalyzes the transfer of the diacylglyceryl group from phosphatidylglycerol to the sulfhydryl group of the N-terminal cysteine of a prolipoprotein, the first step in the formation of mature lipoproteins.</text>
</comment>
<comment type="catalytic activity">
    <reaction evidence="1">
        <text>L-cysteinyl-[prolipoprotein] + a 1,2-diacyl-sn-glycero-3-phospho-(1'-sn-glycerol) = an S-1,2-diacyl-sn-glyceryl-L-cysteinyl-[prolipoprotein] + sn-glycerol 1-phosphate + H(+)</text>
        <dbReference type="Rhea" id="RHEA:56712"/>
        <dbReference type="Rhea" id="RHEA-COMP:14679"/>
        <dbReference type="Rhea" id="RHEA-COMP:14680"/>
        <dbReference type="ChEBI" id="CHEBI:15378"/>
        <dbReference type="ChEBI" id="CHEBI:29950"/>
        <dbReference type="ChEBI" id="CHEBI:57685"/>
        <dbReference type="ChEBI" id="CHEBI:64716"/>
        <dbReference type="ChEBI" id="CHEBI:140658"/>
        <dbReference type="EC" id="2.5.1.145"/>
    </reaction>
</comment>
<comment type="pathway">
    <text evidence="1">Protein modification; lipoprotein biosynthesis (diacylglyceryl transfer).</text>
</comment>
<comment type="subcellular location">
    <subcellularLocation>
        <location evidence="1">Cell inner membrane</location>
        <topology evidence="1">Multi-pass membrane protein</topology>
    </subcellularLocation>
</comment>
<comment type="similarity">
    <text evidence="1">Belongs to the Lgt family.</text>
</comment>
<accession>B8D9L7</accession>